<reference key="1">
    <citation type="journal article" date="2004" name="Proc. Natl. Acad. Sci. U.S.A.">
        <title>The complete genomic sequence of Nocardia farcinica IFM 10152.</title>
        <authorList>
            <person name="Ishikawa J."/>
            <person name="Yamashita A."/>
            <person name="Mikami Y."/>
            <person name="Hoshino Y."/>
            <person name="Kurita H."/>
            <person name="Hotta K."/>
            <person name="Shiba T."/>
            <person name="Hattori M."/>
        </authorList>
    </citation>
    <scope>NUCLEOTIDE SEQUENCE [LARGE SCALE GENOMIC DNA]</scope>
    <source>
        <strain>IFM 10152</strain>
    </source>
</reference>
<evidence type="ECO:0000255" key="1">
    <source>
        <dbReference type="HAMAP-Rule" id="MF_00572"/>
    </source>
</evidence>
<evidence type="ECO:0000256" key="2">
    <source>
        <dbReference type="SAM" id="MobiDB-lite"/>
    </source>
</evidence>
<proteinExistence type="inferred from homology"/>
<protein>
    <recommendedName>
        <fullName evidence="1">2-isopropylmalate synthase</fullName>
        <ecNumber evidence="1">2.3.3.13</ecNumber>
    </recommendedName>
    <alternativeName>
        <fullName evidence="1">Alpha-IPM synthase</fullName>
    </alternativeName>
    <alternativeName>
        <fullName evidence="1">Alpha-isopropylmalate synthase</fullName>
    </alternativeName>
</protein>
<feature type="chain" id="PRO_0000406878" description="2-isopropylmalate synthase">
    <location>
        <begin position="1"/>
        <end position="580"/>
    </location>
</feature>
<feature type="domain" description="Pyruvate carboxyltransferase" evidence="1">
    <location>
        <begin position="61"/>
        <end position="334"/>
    </location>
</feature>
<feature type="region of interest" description="Disordered" evidence="2">
    <location>
        <begin position="1"/>
        <end position="37"/>
    </location>
</feature>
<feature type="region of interest" description="Regulatory domain" evidence="1">
    <location>
        <begin position="476"/>
        <end position="580"/>
    </location>
</feature>
<feature type="compositionally biased region" description="Polar residues" evidence="2">
    <location>
        <begin position="1"/>
        <end position="11"/>
    </location>
</feature>
<feature type="binding site" evidence="1">
    <location>
        <position position="70"/>
    </location>
    <ligand>
        <name>Mg(2+)</name>
        <dbReference type="ChEBI" id="CHEBI:18420"/>
    </ligand>
</feature>
<feature type="binding site" evidence="1">
    <location>
        <position position="273"/>
    </location>
    <ligand>
        <name>Mg(2+)</name>
        <dbReference type="ChEBI" id="CHEBI:18420"/>
    </ligand>
</feature>
<feature type="binding site" evidence="1">
    <location>
        <position position="275"/>
    </location>
    <ligand>
        <name>Mg(2+)</name>
        <dbReference type="ChEBI" id="CHEBI:18420"/>
    </ligand>
</feature>
<feature type="binding site" evidence="1">
    <location>
        <position position="309"/>
    </location>
    <ligand>
        <name>Mg(2+)</name>
        <dbReference type="ChEBI" id="CHEBI:18420"/>
    </ligand>
</feature>
<gene>
    <name evidence="1" type="primary">leuA</name>
    <name type="ordered locus">NFA_30390</name>
</gene>
<organism>
    <name type="scientific">Nocardia farcinica (strain IFM 10152)</name>
    <dbReference type="NCBI Taxonomy" id="247156"/>
    <lineage>
        <taxon>Bacteria</taxon>
        <taxon>Bacillati</taxon>
        <taxon>Actinomycetota</taxon>
        <taxon>Actinomycetes</taxon>
        <taxon>Mycobacteriales</taxon>
        <taxon>Nocardiaceae</taxon>
        <taxon>Nocardia</taxon>
    </lineage>
</organism>
<keyword id="KW-0028">Amino-acid biosynthesis</keyword>
<keyword id="KW-0100">Branched-chain amino acid biosynthesis</keyword>
<keyword id="KW-0963">Cytoplasm</keyword>
<keyword id="KW-0432">Leucine biosynthesis</keyword>
<keyword id="KW-0460">Magnesium</keyword>
<keyword id="KW-0479">Metal-binding</keyword>
<keyword id="KW-1185">Reference proteome</keyword>
<keyword id="KW-0808">Transferase</keyword>
<sequence length="580" mass="63442">MSATAFPTLSTPAGEIPATAPAWNRQRRSQMPSHRYRDVHSRVAVPLTDRQWPTRRLTEAPLWVPVDLRDGNQALAEPMDPARKRRFFELLVAMGYKEIEVGYPSASQTDFDFVRLLADTDLAPDDVTVVVFTPARRDLIERTVESIRGITNPVVVHMYTATAPTWREVVLGHDRAALRALILDGGREVLRCAGDLPTVRFEFSPEVFNLTEPDFVLEICDAMTELWQATPQRPVILNLPATVEVATPNVYADQIEYMHRNLARRDSVILSVHPHNDRGTGIACAELAVLAGAQRVEGCVFGNGERTGNVDIATLALNLHAQGVDPMIDFSDIDEIRRTVEYCNRVEIHARHPYVGDLVHTAFSGTHQDAIKKGLAEHRARAAARGVPEREIDWRVPYLPIDPADIGRSYDAVIRVNSQSGKGGIAYLLESEYGTVLPRRLQIDFARHVQQHTDDTGREVTAAELWSLFSAVYLREGEADAPQADLGNRLGIDGVVASGASAAELGAALRRHGVELEVLAVHHTTVTGELLALVEYRDGAGVRWSAGRGRTAGEAVGNAVAAAVGPATAPARAVAEVRPG</sequence>
<dbReference type="EC" id="2.3.3.13" evidence="1"/>
<dbReference type="EMBL" id="AP006618">
    <property type="protein sequence ID" value="BAD57886.1"/>
    <property type="molecule type" value="Genomic_DNA"/>
</dbReference>
<dbReference type="RefSeq" id="WP_041560172.1">
    <property type="nucleotide sequence ID" value="NC_006361.1"/>
</dbReference>
<dbReference type="SMR" id="Q5YVA5"/>
<dbReference type="STRING" id="247156.NFA_30390"/>
<dbReference type="GeneID" id="61133756"/>
<dbReference type="KEGG" id="nfa:NFA_30390"/>
<dbReference type="eggNOG" id="COG0119">
    <property type="taxonomic scope" value="Bacteria"/>
</dbReference>
<dbReference type="HOGENOM" id="CLU_004588_3_2_11"/>
<dbReference type="OrthoDB" id="9803573at2"/>
<dbReference type="UniPathway" id="UPA00048">
    <property type="reaction ID" value="UER00070"/>
</dbReference>
<dbReference type="Proteomes" id="UP000006820">
    <property type="component" value="Chromosome"/>
</dbReference>
<dbReference type="GO" id="GO:0005737">
    <property type="term" value="C:cytoplasm"/>
    <property type="evidence" value="ECO:0007669"/>
    <property type="project" value="UniProtKB-SubCell"/>
</dbReference>
<dbReference type="GO" id="GO:0003852">
    <property type="term" value="F:2-isopropylmalate synthase activity"/>
    <property type="evidence" value="ECO:0007669"/>
    <property type="project" value="UniProtKB-UniRule"/>
</dbReference>
<dbReference type="GO" id="GO:0003985">
    <property type="term" value="F:acetyl-CoA C-acetyltransferase activity"/>
    <property type="evidence" value="ECO:0007669"/>
    <property type="project" value="UniProtKB-UniRule"/>
</dbReference>
<dbReference type="GO" id="GO:0000287">
    <property type="term" value="F:magnesium ion binding"/>
    <property type="evidence" value="ECO:0007669"/>
    <property type="project" value="UniProtKB-UniRule"/>
</dbReference>
<dbReference type="GO" id="GO:0009098">
    <property type="term" value="P:L-leucine biosynthetic process"/>
    <property type="evidence" value="ECO:0007669"/>
    <property type="project" value="UniProtKB-UniRule"/>
</dbReference>
<dbReference type="CDD" id="cd07942">
    <property type="entry name" value="DRE_TIM_LeuA"/>
    <property type="match status" value="1"/>
</dbReference>
<dbReference type="Gene3D" id="3.30.160.270">
    <property type="match status" value="1"/>
</dbReference>
<dbReference type="Gene3D" id="3.20.20.70">
    <property type="entry name" value="Aldolase class I"/>
    <property type="match status" value="1"/>
</dbReference>
<dbReference type="HAMAP" id="MF_00572">
    <property type="entry name" value="LeuA_type2"/>
    <property type="match status" value="1"/>
</dbReference>
<dbReference type="InterPro" id="IPR002034">
    <property type="entry name" value="AIPM/Hcit_synth_CS"/>
</dbReference>
<dbReference type="InterPro" id="IPR013785">
    <property type="entry name" value="Aldolase_TIM"/>
</dbReference>
<dbReference type="InterPro" id="IPR005668">
    <property type="entry name" value="IPM_Synthase"/>
</dbReference>
<dbReference type="InterPro" id="IPR054692">
    <property type="entry name" value="LeuA-like_post-cat"/>
</dbReference>
<dbReference type="InterPro" id="IPR036230">
    <property type="entry name" value="LeuA_allosteric_dom_sf"/>
</dbReference>
<dbReference type="InterPro" id="IPR039371">
    <property type="entry name" value="LeuA_N_DRE-TIM"/>
</dbReference>
<dbReference type="InterPro" id="IPR000891">
    <property type="entry name" value="PYR_CT"/>
</dbReference>
<dbReference type="NCBIfam" id="NF002991">
    <property type="entry name" value="PRK03739.1"/>
    <property type="match status" value="1"/>
</dbReference>
<dbReference type="PANTHER" id="PTHR46911">
    <property type="match status" value="1"/>
</dbReference>
<dbReference type="PANTHER" id="PTHR46911:SF1">
    <property type="entry name" value="2-ISOPROPYLMALATE SYNTHASE"/>
    <property type="match status" value="1"/>
</dbReference>
<dbReference type="Pfam" id="PF00682">
    <property type="entry name" value="HMGL-like"/>
    <property type="match status" value="1"/>
</dbReference>
<dbReference type="Pfam" id="PF22615">
    <property type="entry name" value="IPMS_D2"/>
    <property type="match status" value="1"/>
</dbReference>
<dbReference type="SUPFAM" id="SSF51569">
    <property type="entry name" value="Aldolase"/>
    <property type="match status" value="1"/>
</dbReference>
<dbReference type="SUPFAM" id="SSF89000">
    <property type="entry name" value="post-HMGL domain-like"/>
    <property type="match status" value="1"/>
</dbReference>
<dbReference type="PROSITE" id="PS00815">
    <property type="entry name" value="AIPM_HOMOCIT_SYNTH_1"/>
    <property type="match status" value="1"/>
</dbReference>
<dbReference type="PROSITE" id="PS00816">
    <property type="entry name" value="AIPM_HOMOCIT_SYNTH_2"/>
    <property type="match status" value="1"/>
</dbReference>
<dbReference type="PROSITE" id="PS50991">
    <property type="entry name" value="PYR_CT"/>
    <property type="match status" value="1"/>
</dbReference>
<name>LEU1_NOCFA</name>
<comment type="function">
    <text evidence="1">Catalyzes the condensation of the acetyl group of acetyl-CoA with 3-methyl-2-oxobutanoate (2-ketoisovalerate) to form 3-carboxy-3-hydroxy-4-methylpentanoate (2-isopropylmalate).</text>
</comment>
<comment type="catalytic activity">
    <reaction evidence="1">
        <text>3-methyl-2-oxobutanoate + acetyl-CoA + H2O = (2S)-2-isopropylmalate + CoA + H(+)</text>
        <dbReference type="Rhea" id="RHEA:21524"/>
        <dbReference type="ChEBI" id="CHEBI:1178"/>
        <dbReference type="ChEBI" id="CHEBI:11851"/>
        <dbReference type="ChEBI" id="CHEBI:15377"/>
        <dbReference type="ChEBI" id="CHEBI:15378"/>
        <dbReference type="ChEBI" id="CHEBI:57287"/>
        <dbReference type="ChEBI" id="CHEBI:57288"/>
        <dbReference type="EC" id="2.3.3.13"/>
    </reaction>
</comment>
<comment type="cofactor">
    <cofactor evidence="1">
        <name>Mg(2+)</name>
        <dbReference type="ChEBI" id="CHEBI:18420"/>
    </cofactor>
</comment>
<comment type="pathway">
    <text evidence="1">Amino-acid biosynthesis; L-leucine biosynthesis; L-leucine from 3-methyl-2-oxobutanoate: step 1/4.</text>
</comment>
<comment type="subunit">
    <text evidence="1">Homodimer.</text>
</comment>
<comment type="subcellular location">
    <subcellularLocation>
        <location evidence="1">Cytoplasm</location>
    </subcellularLocation>
</comment>
<comment type="similarity">
    <text evidence="1">Belongs to the alpha-IPM synthase/homocitrate synthase family. LeuA type 2 subfamily.</text>
</comment>
<accession>Q5YVA5</accession>